<accession>Q6CQ61</accession>
<proteinExistence type="inferred from homology"/>
<gene>
    <name type="primary">SSU72</name>
    <name type="ordered locus">KLLA0D19514g</name>
</gene>
<feature type="chain" id="PRO_0000255610" description="RNA polymerase II subunit A C-terminal domain phosphatase SSU72">
    <location>
        <begin position="1"/>
        <end position="207"/>
    </location>
</feature>
<comment type="function">
    <text evidence="1">Processively dephosphorylates Ser-5 of the heptad repeats YSPTSPS in the C-terminal domain of the largest RNA polymerase II subunit (RPB1).</text>
</comment>
<comment type="function">
    <text evidence="1">Component of the cleavage and polyadenylation factor (CPF) complex, which plays a key role in polyadenylation-dependent pre-mRNA 3'-end formation and cooperates with cleavage factors including the CFIA complex and NAB4/CFIB. SSU72 is required for 3'-end formation of snoRNAs (By similarity).</text>
</comment>
<comment type="catalytic activity">
    <reaction>
        <text>O-phospho-L-seryl-[protein] + H2O = L-seryl-[protein] + phosphate</text>
        <dbReference type="Rhea" id="RHEA:20629"/>
        <dbReference type="Rhea" id="RHEA-COMP:9863"/>
        <dbReference type="Rhea" id="RHEA-COMP:11604"/>
        <dbReference type="ChEBI" id="CHEBI:15377"/>
        <dbReference type="ChEBI" id="CHEBI:29999"/>
        <dbReference type="ChEBI" id="CHEBI:43474"/>
        <dbReference type="ChEBI" id="CHEBI:83421"/>
        <dbReference type="EC" id="3.1.3.16"/>
    </reaction>
</comment>
<comment type="catalytic activity">
    <reaction>
        <text>O-phospho-L-threonyl-[protein] + H2O = L-threonyl-[protein] + phosphate</text>
        <dbReference type="Rhea" id="RHEA:47004"/>
        <dbReference type="Rhea" id="RHEA-COMP:11060"/>
        <dbReference type="Rhea" id="RHEA-COMP:11605"/>
        <dbReference type="ChEBI" id="CHEBI:15377"/>
        <dbReference type="ChEBI" id="CHEBI:30013"/>
        <dbReference type="ChEBI" id="CHEBI:43474"/>
        <dbReference type="ChEBI" id="CHEBI:61977"/>
        <dbReference type="EC" id="3.1.3.16"/>
    </reaction>
</comment>
<comment type="subunit">
    <text evidence="1">Component of the cleavage and polyadenylation factor (CPF) complex.</text>
</comment>
<comment type="subcellular location">
    <subcellularLocation>
        <location evidence="1">Nucleus</location>
    </subcellularLocation>
</comment>
<comment type="similarity">
    <text evidence="2">Belongs to the SSU72 phosphatase family.</text>
</comment>
<organism>
    <name type="scientific">Kluyveromyces lactis (strain ATCC 8585 / CBS 2359 / DSM 70799 / NBRC 1267 / NRRL Y-1140 / WM37)</name>
    <name type="common">Yeast</name>
    <name type="synonym">Candida sphaerica</name>
    <dbReference type="NCBI Taxonomy" id="284590"/>
    <lineage>
        <taxon>Eukaryota</taxon>
        <taxon>Fungi</taxon>
        <taxon>Dikarya</taxon>
        <taxon>Ascomycota</taxon>
        <taxon>Saccharomycotina</taxon>
        <taxon>Saccharomycetes</taxon>
        <taxon>Saccharomycetales</taxon>
        <taxon>Saccharomycetaceae</taxon>
        <taxon>Kluyveromyces</taxon>
    </lineage>
</organism>
<sequence>MSESMRNSGLKFCTVCASNNNRSMESHRVLEEAGYDVSSYGTGSAVRLPGLSIDKPNVYSFGTPYDDIYNDLISQSEDRYKQNGVLEMLDRNRKLKKAPEKWHDGRKVFDFVFTCEERCFDSVCEDLMNRGGQLNLIAHIINIDIKDDNENAKIGGRAILRLADMLRDKVFECEKNGTQFEDFIMDVFTEWQEKYPKLPLTYSAAYY</sequence>
<reference key="1">
    <citation type="journal article" date="2004" name="Nature">
        <title>Genome evolution in yeasts.</title>
        <authorList>
            <person name="Dujon B."/>
            <person name="Sherman D."/>
            <person name="Fischer G."/>
            <person name="Durrens P."/>
            <person name="Casaregola S."/>
            <person name="Lafontaine I."/>
            <person name="de Montigny J."/>
            <person name="Marck C."/>
            <person name="Neuveglise C."/>
            <person name="Talla E."/>
            <person name="Goffard N."/>
            <person name="Frangeul L."/>
            <person name="Aigle M."/>
            <person name="Anthouard V."/>
            <person name="Babour A."/>
            <person name="Barbe V."/>
            <person name="Barnay S."/>
            <person name="Blanchin S."/>
            <person name="Beckerich J.-M."/>
            <person name="Beyne E."/>
            <person name="Bleykasten C."/>
            <person name="Boisrame A."/>
            <person name="Boyer J."/>
            <person name="Cattolico L."/>
            <person name="Confanioleri F."/>
            <person name="de Daruvar A."/>
            <person name="Despons L."/>
            <person name="Fabre E."/>
            <person name="Fairhead C."/>
            <person name="Ferry-Dumazet H."/>
            <person name="Groppi A."/>
            <person name="Hantraye F."/>
            <person name="Hennequin C."/>
            <person name="Jauniaux N."/>
            <person name="Joyet P."/>
            <person name="Kachouri R."/>
            <person name="Kerrest A."/>
            <person name="Koszul R."/>
            <person name="Lemaire M."/>
            <person name="Lesur I."/>
            <person name="Ma L."/>
            <person name="Muller H."/>
            <person name="Nicaud J.-M."/>
            <person name="Nikolski M."/>
            <person name="Oztas S."/>
            <person name="Ozier-Kalogeropoulos O."/>
            <person name="Pellenz S."/>
            <person name="Potier S."/>
            <person name="Richard G.-F."/>
            <person name="Straub M.-L."/>
            <person name="Suleau A."/>
            <person name="Swennen D."/>
            <person name="Tekaia F."/>
            <person name="Wesolowski-Louvel M."/>
            <person name="Westhof E."/>
            <person name="Wirth B."/>
            <person name="Zeniou-Meyer M."/>
            <person name="Zivanovic Y."/>
            <person name="Bolotin-Fukuhara M."/>
            <person name="Thierry A."/>
            <person name="Bouchier C."/>
            <person name="Caudron B."/>
            <person name="Scarpelli C."/>
            <person name="Gaillardin C."/>
            <person name="Weissenbach J."/>
            <person name="Wincker P."/>
            <person name="Souciet J.-L."/>
        </authorList>
    </citation>
    <scope>NUCLEOTIDE SEQUENCE [LARGE SCALE GENOMIC DNA]</scope>
    <source>
        <strain>ATCC 8585 / CBS 2359 / DSM 70799 / NBRC 1267 / NRRL Y-1140 / WM37</strain>
    </source>
</reference>
<protein>
    <recommendedName>
        <fullName>RNA polymerase II subunit A C-terminal domain phosphatase SSU72</fullName>
        <shortName>CTD phosphatase SSU72</shortName>
        <ecNumber>3.1.3.16</ecNumber>
    </recommendedName>
    <alternativeName>
        <fullName>Suppressor of SUA7 protein 2 homolog</fullName>
    </alternativeName>
</protein>
<dbReference type="EC" id="3.1.3.16"/>
<dbReference type="EMBL" id="CR382124">
    <property type="protein sequence ID" value="CAH01024.1"/>
    <property type="molecule type" value="Genomic_DNA"/>
</dbReference>
<dbReference type="RefSeq" id="XP_453928.1">
    <property type="nucleotide sequence ID" value="XM_453928.1"/>
</dbReference>
<dbReference type="SMR" id="Q6CQ61"/>
<dbReference type="FunCoup" id="Q6CQ61">
    <property type="interactions" value="1011"/>
</dbReference>
<dbReference type="STRING" id="284590.Q6CQ61"/>
<dbReference type="PaxDb" id="284590-Q6CQ61"/>
<dbReference type="KEGG" id="kla:KLLA0_D19514g"/>
<dbReference type="eggNOG" id="KOG2424">
    <property type="taxonomic scope" value="Eukaryota"/>
</dbReference>
<dbReference type="HOGENOM" id="CLU_062463_0_1_1"/>
<dbReference type="InParanoid" id="Q6CQ61"/>
<dbReference type="OMA" id="TQPNVYQ"/>
<dbReference type="Proteomes" id="UP000000598">
    <property type="component" value="Chromosome D"/>
</dbReference>
<dbReference type="GO" id="GO:0005634">
    <property type="term" value="C:nucleus"/>
    <property type="evidence" value="ECO:0007669"/>
    <property type="project" value="UniProtKB-SubCell"/>
</dbReference>
<dbReference type="GO" id="GO:0004722">
    <property type="term" value="F:protein serine/threonine phosphatase activity"/>
    <property type="evidence" value="ECO:0007669"/>
    <property type="project" value="UniProtKB-EC"/>
</dbReference>
<dbReference type="GO" id="GO:0006397">
    <property type="term" value="P:mRNA processing"/>
    <property type="evidence" value="ECO:0007669"/>
    <property type="project" value="UniProtKB-KW"/>
</dbReference>
<dbReference type="FunFam" id="3.40.50.2300:FF:000039">
    <property type="entry name" value="RNA polymerase II subunit A C-terminal domain phosphatase"/>
    <property type="match status" value="1"/>
</dbReference>
<dbReference type="FunFam" id="3.40.50.2300:FF:000189">
    <property type="entry name" value="SSU72p Phosphatase and transcription/RNA-processing factor"/>
    <property type="match status" value="1"/>
</dbReference>
<dbReference type="Gene3D" id="3.40.50.2300">
    <property type="match status" value="2"/>
</dbReference>
<dbReference type="InterPro" id="IPR006811">
    <property type="entry name" value="RNA_pol_II_suA"/>
</dbReference>
<dbReference type="PANTHER" id="PTHR20383">
    <property type="entry name" value="RNA POLYMERASE II SUBUNIT A C-TERMINAL DOMAIN PHOSPHATASE"/>
    <property type="match status" value="1"/>
</dbReference>
<dbReference type="Pfam" id="PF04722">
    <property type="entry name" value="Ssu72"/>
    <property type="match status" value="1"/>
</dbReference>
<name>SSU72_KLULA</name>
<evidence type="ECO:0000250" key="1"/>
<evidence type="ECO:0000305" key="2"/>
<keyword id="KW-0378">Hydrolase</keyword>
<keyword id="KW-0507">mRNA processing</keyword>
<keyword id="KW-0539">Nucleus</keyword>
<keyword id="KW-0904">Protein phosphatase</keyword>
<keyword id="KW-1185">Reference proteome</keyword>